<gene>
    <name evidence="1" type="primary">rsxD</name>
    <name type="ordered locus">ECUMN_1921</name>
</gene>
<evidence type="ECO:0000255" key="1">
    <source>
        <dbReference type="HAMAP-Rule" id="MF_00462"/>
    </source>
</evidence>
<comment type="function">
    <text evidence="1">Part of a membrane-bound complex that couples electron transfer with translocation of ions across the membrane. Required to maintain the reduced state of SoxR.</text>
</comment>
<comment type="cofactor">
    <cofactor evidence="1">
        <name>FMN</name>
        <dbReference type="ChEBI" id="CHEBI:58210"/>
    </cofactor>
</comment>
<comment type="subunit">
    <text evidence="1">The complex is composed of six subunits: RsxA, RsxB, RsxC, RsxD, RsxE and RsxG.</text>
</comment>
<comment type="subcellular location">
    <subcellularLocation>
        <location evidence="1">Cell inner membrane</location>
        <topology evidence="1">Multi-pass membrane protein</topology>
    </subcellularLocation>
</comment>
<comment type="similarity">
    <text evidence="1">Belongs to the NqrB/RnfD family.</text>
</comment>
<reference key="1">
    <citation type="journal article" date="2009" name="PLoS Genet.">
        <title>Organised genome dynamics in the Escherichia coli species results in highly diverse adaptive paths.</title>
        <authorList>
            <person name="Touchon M."/>
            <person name="Hoede C."/>
            <person name="Tenaillon O."/>
            <person name="Barbe V."/>
            <person name="Baeriswyl S."/>
            <person name="Bidet P."/>
            <person name="Bingen E."/>
            <person name="Bonacorsi S."/>
            <person name="Bouchier C."/>
            <person name="Bouvet O."/>
            <person name="Calteau A."/>
            <person name="Chiapello H."/>
            <person name="Clermont O."/>
            <person name="Cruveiller S."/>
            <person name="Danchin A."/>
            <person name="Diard M."/>
            <person name="Dossat C."/>
            <person name="Karoui M.E."/>
            <person name="Frapy E."/>
            <person name="Garry L."/>
            <person name="Ghigo J.M."/>
            <person name="Gilles A.M."/>
            <person name="Johnson J."/>
            <person name="Le Bouguenec C."/>
            <person name="Lescat M."/>
            <person name="Mangenot S."/>
            <person name="Martinez-Jehanne V."/>
            <person name="Matic I."/>
            <person name="Nassif X."/>
            <person name="Oztas S."/>
            <person name="Petit M.A."/>
            <person name="Pichon C."/>
            <person name="Rouy Z."/>
            <person name="Ruf C.S."/>
            <person name="Schneider D."/>
            <person name="Tourret J."/>
            <person name="Vacherie B."/>
            <person name="Vallenet D."/>
            <person name="Medigue C."/>
            <person name="Rocha E.P.C."/>
            <person name="Denamur E."/>
        </authorList>
    </citation>
    <scope>NUCLEOTIDE SEQUENCE [LARGE SCALE GENOMIC DNA]</scope>
    <source>
        <strain>UMN026 / ExPEC</strain>
    </source>
</reference>
<sequence>MVFRIASSPYTHNQRQTSRIMLLVLLAAVPGIAAQLWFFGWGTLVQILLASVSALLAEALVLKLRKQSVAATLKDNSALLTGLLLAVSIPPLAPWWMVVLGTVFAVIIAKQLYGGLGQNPFNPAMIGYVVLLISFPVQMTSWLPPHEIAVNIPGFIDAIQVIFSGHTTSGGDMNTLRLGIDGISQATPLDTFKTSVRAGHSVEQIMQYPIYSGILAGAGWQWVNLAWLAGGVWLLWQKAIRWHIPLSFLVTLALCATLGWLFSPETLASPQIHLLSGATMLGAFFILTDPVTASTTNRGRLIFGALAGLLVWLIRSFGGYPDGVAFAVLLANITVPLIDYYTRPRVYGHRKG</sequence>
<dbReference type="EC" id="7.-.-.-" evidence="1"/>
<dbReference type="EMBL" id="CU928163">
    <property type="protein sequence ID" value="CAR13118.1"/>
    <property type="molecule type" value="Genomic_DNA"/>
</dbReference>
<dbReference type="RefSeq" id="WP_000231941.1">
    <property type="nucleotide sequence ID" value="NC_011751.1"/>
</dbReference>
<dbReference type="RefSeq" id="YP_002412650.1">
    <property type="nucleotide sequence ID" value="NC_011751.1"/>
</dbReference>
<dbReference type="SMR" id="B7NB84"/>
<dbReference type="STRING" id="585056.ECUMN_1921"/>
<dbReference type="KEGG" id="eum:ECUMN_1921"/>
<dbReference type="PATRIC" id="fig|585056.7.peg.2104"/>
<dbReference type="HOGENOM" id="CLU_042020_0_0_6"/>
<dbReference type="Proteomes" id="UP000007097">
    <property type="component" value="Chromosome"/>
</dbReference>
<dbReference type="GO" id="GO:0005886">
    <property type="term" value="C:plasma membrane"/>
    <property type="evidence" value="ECO:0007669"/>
    <property type="project" value="UniProtKB-SubCell"/>
</dbReference>
<dbReference type="GO" id="GO:0022900">
    <property type="term" value="P:electron transport chain"/>
    <property type="evidence" value="ECO:0007669"/>
    <property type="project" value="UniProtKB-UniRule"/>
</dbReference>
<dbReference type="GO" id="GO:0055085">
    <property type="term" value="P:transmembrane transport"/>
    <property type="evidence" value="ECO:0007669"/>
    <property type="project" value="InterPro"/>
</dbReference>
<dbReference type="HAMAP" id="MF_00462">
    <property type="entry name" value="RsxD_RnfD"/>
    <property type="match status" value="1"/>
</dbReference>
<dbReference type="InterPro" id="IPR004338">
    <property type="entry name" value="NqrB/RnfD"/>
</dbReference>
<dbReference type="InterPro" id="IPR011303">
    <property type="entry name" value="RnfD_bac"/>
</dbReference>
<dbReference type="NCBIfam" id="NF002011">
    <property type="entry name" value="PRK00816.1"/>
    <property type="match status" value="1"/>
</dbReference>
<dbReference type="NCBIfam" id="TIGR01946">
    <property type="entry name" value="rnfD"/>
    <property type="match status" value="1"/>
</dbReference>
<dbReference type="PANTHER" id="PTHR30578">
    <property type="entry name" value="ELECTRON TRANSPORT COMPLEX PROTEIN RNFD"/>
    <property type="match status" value="1"/>
</dbReference>
<dbReference type="PANTHER" id="PTHR30578:SF0">
    <property type="entry name" value="ION-TRANSLOCATING OXIDOREDUCTASE COMPLEX SUBUNIT D"/>
    <property type="match status" value="1"/>
</dbReference>
<dbReference type="Pfam" id="PF03116">
    <property type="entry name" value="NQR2_RnfD_RnfE"/>
    <property type="match status" value="1"/>
</dbReference>
<name>RSXD_ECOLU</name>
<keyword id="KW-0997">Cell inner membrane</keyword>
<keyword id="KW-1003">Cell membrane</keyword>
<keyword id="KW-0249">Electron transport</keyword>
<keyword id="KW-0285">Flavoprotein</keyword>
<keyword id="KW-0288">FMN</keyword>
<keyword id="KW-0472">Membrane</keyword>
<keyword id="KW-0597">Phosphoprotein</keyword>
<keyword id="KW-1278">Translocase</keyword>
<keyword id="KW-0812">Transmembrane</keyword>
<keyword id="KW-1133">Transmembrane helix</keyword>
<keyword id="KW-0813">Transport</keyword>
<proteinExistence type="inferred from homology"/>
<protein>
    <recommendedName>
        <fullName evidence="1">Ion-translocating oxidoreductase complex subunit D</fullName>
        <ecNumber evidence="1">7.-.-.-</ecNumber>
    </recommendedName>
    <alternativeName>
        <fullName evidence="1">Rsx electron transport complex subunit D</fullName>
    </alternativeName>
</protein>
<feature type="chain" id="PRO_1000191675" description="Ion-translocating oxidoreductase complex subunit D">
    <location>
        <begin position="1"/>
        <end position="352"/>
    </location>
</feature>
<feature type="transmembrane region" description="Helical" evidence="1">
    <location>
        <begin position="20"/>
        <end position="40"/>
    </location>
</feature>
<feature type="transmembrane region" description="Helical" evidence="1">
    <location>
        <begin position="42"/>
        <end position="62"/>
    </location>
</feature>
<feature type="transmembrane region" description="Helical" evidence="1">
    <location>
        <begin position="89"/>
        <end position="109"/>
    </location>
</feature>
<feature type="transmembrane region" description="Helical" evidence="1">
    <location>
        <begin position="123"/>
        <end position="143"/>
    </location>
</feature>
<feature type="transmembrane region" description="Helical" evidence="1">
    <location>
        <begin position="214"/>
        <end position="234"/>
    </location>
</feature>
<feature type="transmembrane region" description="Helical" evidence="1">
    <location>
        <begin position="242"/>
        <end position="262"/>
    </location>
</feature>
<feature type="transmembrane region" description="Helical" evidence="1">
    <location>
        <begin position="267"/>
        <end position="287"/>
    </location>
</feature>
<feature type="transmembrane region" description="Helical" evidence="1">
    <location>
        <begin position="301"/>
        <end position="321"/>
    </location>
</feature>
<feature type="transmembrane region" description="Helical" evidence="1">
    <location>
        <begin position="322"/>
        <end position="342"/>
    </location>
</feature>
<feature type="modified residue" description="FMN phosphoryl threonine" evidence="1">
    <location>
        <position position="187"/>
    </location>
</feature>
<organism>
    <name type="scientific">Escherichia coli O17:K52:H18 (strain UMN026 / ExPEC)</name>
    <dbReference type="NCBI Taxonomy" id="585056"/>
    <lineage>
        <taxon>Bacteria</taxon>
        <taxon>Pseudomonadati</taxon>
        <taxon>Pseudomonadota</taxon>
        <taxon>Gammaproteobacteria</taxon>
        <taxon>Enterobacterales</taxon>
        <taxon>Enterobacteriaceae</taxon>
        <taxon>Escherichia</taxon>
    </lineage>
</organism>
<accession>B7NB84</accession>